<comment type="function">
    <text evidence="1">Catalyzes the hydrolysis of 6-phosphogluconolactone to 6-phosphogluconate.</text>
</comment>
<comment type="catalytic activity">
    <reaction evidence="1">
        <text>6-phospho-D-glucono-1,5-lactone + H2O = 6-phospho-D-gluconate + H(+)</text>
        <dbReference type="Rhea" id="RHEA:12556"/>
        <dbReference type="ChEBI" id="CHEBI:15377"/>
        <dbReference type="ChEBI" id="CHEBI:15378"/>
        <dbReference type="ChEBI" id="CHEBI:57955"/>
        <dbReference type="ChEBI" id="CHEBI:58759"/>
        <dbReference type="EC" id="3.1.1.31"/>
    </reaction>
</comment>
<comment type="pathway">
    <text evidence="1">Carbohydrate degradation; pentose phosphate pathway; D-ribulose 5-phosphate from D-glucose 6-phosphate (oxidative stage): step 2/3.</text>
</comment>
<comment type="similarity">
    <text evidence="1">Belongs to the cycloisomerase 2 family.</text>
</comment>
<comment type="sequence caution" evidence="2">
    <conflict type="erroneous initiation">
        <sequence resource="EMBL-CDS" id="ABV13490"/>
    </conflict>
</comment>
<reference key="1">
    <citation type="submission" date="2007-08" db="EMBL/GenBank/DDBJ databases">
        <authorList>
            <consortium name="The Citrobacter koseri Genome Sequencing Project"/>
            <person name="McClelland M."/>
            <person name="Sanderson E.K."/>
            <person name="Porwollik S."/>
            <person name="Spieth J."/>
            <person name="Clifton W.S."/>
            <person name="Latreille P."/>
            <person name="Courtney L."/>
            <person name="Wang C."/>
            <person name="Pepin K."/>
            <person name="Bhonagiri V."/>
            <person name="Nash W."/>
            <person name="Johnson M."/>
            <person name="Thiruvilangam P."/>
            <person name="Wilson R."/>
        </authorList>
    </citation>
    <scope>NUCLEOTIDE SEQUENCE [LARGE SCALE GENOMIC DNA]</scope>
    <source>
        <strain>ATCC BAA-895 / CDC 4225-83 / SGSC4696</strain>
    </source>
</reference>
<evidence type="ECO:0000255" key="1">
    <source>
        <dbReference type="HAMAP-Rule" id="MF_01605"/>
    </source>
</evidence>
<evidence type="ECO:0000305" key="2"/>
<dbReference type="EC" id="3.1.1.31" evidence="1"/>
<dbReference type="EMBL" id="CP000822">
    <property type="protein sequence ID" value="ABV13490.1"/>
    <property type="status" value="ALT_INIT"/>
    <property type="molecule type" value="Genomic_DNA"/>
</dbReference>
<dbReference type="RefSeq" id="WP_024130516.1">
    <property type="nucleotide sequence ID" value="NC_009792.1"/>
</dbReference>
<dbReference type="SMR" id="A8AJ27"/>
<dbReference type="STRING" id="290338.CKO_02368"/>
<dbReference type="GeneID" id="45136269"/>
<dbReference type="KEGG" id="cko:CKO_02368"/>
<dbReference type="HOGENOM" id="CLU_038716_2_0_6"/>
<dbReference type="OrthoDB" id="9790815at2"/>
<dbReference type="UniPathway" id="UPA00115">
    <property type="reaction ID" value="UER00409"/>
</dbReference>
<dbReference type="Proteomes" id="UP000008148">
    <property type="component" value="Chromosome"/>
</dbReference>
<dbReference type="GO" id="GO:0005829">
    <property type="term" value="C:cytosol"/>
    <property type="evidence" value="ECO:0007669"/>
    <property type="project" value="TreeGrafter"/>
</dbReference>
<dbReference type="GO" id="GO:0017057">
    <property type="term" value="F:6-phosphogluconolactonase activity"/>
    <property type="evidence" value="ECO:0007669"/>
    <property type="project" value="UniProtKB-UniRule"/>
</dbReference>
<dbReference type="GO" id="GO:0006006">
    <property type="term" value="P:glucose metabolic process"/>
    <property type="evidence" value="ECO:0007669"/>
    <property type="project" value="UniProtKB-KW"/>
</dbReference>
<dbReference type="GO" id="GO:0009051">
    <property type="term" value="P:pentose-phosphate shunt, oxidative branch"/>
    <property type="evidence" value="ECO:0007669"/>
    <property type="project" value="UniProtKB-UniRule"/>
</dbReference>
<dbReference type="FunFam" id="2.130.10.10:FF:000051">
    <property type="entry name" value="6-phosphogluconolactonase"/>
    <property type="match status" value="1"/>
</dbReference>
<dbReference type="Gene3D" id="2.130.10.10">
    <property type="entry name" value="YVTN repeat-like/Quinoprotein amine dehydrogenase"/>
    <property type="match status" value="1"/>
</dbReference>
<dbReference type="HAMAP" id="MF_01605">
    <property type="entry name" value="6P_gluconolactonase"/>
    <property type="match status" value="1"/>
</dbReference>
<dbReference type="InterPro" id="IPR022528">
    <property type="entry name" value="6-phosphogluconolactonase_YbhE"/>
</dbReference>
<dbReference type="InterPro" id="IPR050282">
    <property type="entry name" value="Cycloisomerase_2"/>
</dbReference>
<dbReference type="InterPro" id="IPR019405">
    <property type="entry name" value="Lactonase_7-beta_prop"/>
</dbReference>
<dbReference type="InterPro" id="IPR011045">
    <property type="entry name" value="N2O_reductase_N"/>
</dbReference>
<dbReference type="InterPro" id="IPR015943">
    <property type="entry name" value="WD40/YVTN_repeat-like_dom_sf"/>
</dbReference>
<dbReference type="NCBIfam" id="NF008258">
    <property type="entry name" value="PRK11028.1"/>
    <property type="match status" value="1"/>
</dbReference>
<dbReference type="PANTHER" id="PTHR30344:SF1">
    <property type="entry name" value="6-PHOSPHOGLUCONOLACTONASE"/>
    <property type="match status" value="1"/>
</dbReference>
<dbReference type="PANTHER" id="PTHR30344">
    <property type="entry name" value="6-PHOSPHOGLUCONOLACTONASE-RELATED"/>
    <property type="match status" value="1"/>
</dbReference>
<dbReference type="Pfam" id="PF10282">
    <property type="entry name" value="Lactonase"/>
    <property type="match status" value="1"/>
</dbReference>
<dbReference type="SUPFAM" id="SSF50974">
    <property type="entry name" value="Nitrous oxide reductase, N-terminal domain"/>
    <property type="match status" value="1"/>
</dbReference>
<sequence>MKQTVYTASPESQQIHVWSLNHDGSLKLVQVVDVPGQVQPMVVSPDKRYLYVGVRPEFRVLAYRIAPDDGALTFAAESALPGSPTHISTDHQGRFVFVGSYNAGNVSVTRLDDGLPAGVVDVVEGLEGCHSANISPDNRTLWVPALKQDRICLFTLSDDGKLVAQEPAEVTTVEGAGPRHMAFHPNQQYAYCVNELNSSVDVWELKDPHGNIECVQTLDMMPADFSDTRWAADIHITPDGRHLYACDRTASLITVFSVSEDGSVLTKEGFQPTETQPRGFNVDHSGKYLIAAGQKSHHIAVYAIAGEQGLLTEKGRYAVGQGPMWVVVNAY</sequence>
<accession>A8AJ27</accession>
<feature type="chain" id="PRO_0000323498" description="6-phosphogluconolactonase">
    <location>
        <begin position="1"/>
        <end position="331"/>
    </location>
</feature>
<organism>
    <name type="scientific">Citrobacter koseri (strain ATCC BAA-895 / CDC 4225-83 / SGSC4696)</name>
    <dbReference type="NCBI Taxonomy" id="290338"/>
    <lineage>
        <taxon>Bacteria</taxon>
        <taxon>Pseudomonadati</taxon>
        <taxon>Pseudomonadota</taxon>
        <taxon>Gammaproteobacteria</taxon>
        <taxon>Enterobacterales</taxon>
        <taxon>Enterobacteriaceae</taxon>
        <taxon>Citrobacter</taxon>
    </lineage>
</organism>
<keyword id="KW-0119">Carbohydrate metabolism</keyword>
<keyword id="KW-0313">Glucose metabolism</keyword>
<keyword id="KW-0378">Hydrolase</keyword>
<keyword id="KW-1185">Reference proteome</keyword>
<proteinExistence type="inferred from homology"/>
<protein>
    <recommendedName>
        <fullName evidence="1">6-phosphogluconolactonase</fullName>
        <shortName evidence="1">6-P-gluconolactonase</shortName>
        <ecNumber evidence="1">3.1.1.31</ecNumber>
    </recommendedName>
</protein>
<name>6PGL_CITK8</name>
<gene>
    <name evidence="1" type="primary">pgl</name>
    <name type="ordered locus">CKO_02368</name>
</gene>